<feature type="chain" id="PRO_0000382699" description="3-hydroxybenzoate 6-hydroxylase">
    <location>
        <begin position="1"/>
        <end position="400"/>
    </location>
</feature>
<organism>
    <name type="scientific">Polaromonas naphthalenivorans (strain CJ2)</name>
    <dbReference type="NCBI Taxonomy" id="365044"/>
    <lineage>
        <taxon>Bacteria</taxon>
        <taxon>Pseudomonadati</taxon>
        <taxon>Pseudomonadota</taxon>
        <taxon>Betaproteobacteria</taxon>
        <taxon>Burkholderiales</taxon>
        <taxon>Comamonadaceae</taxon>
        <taxon>Polaromonas</taxon>
    </lineage>
</organism>
<name>3HBH_POLNA</name>
<protein>
    <recommendedName>
        <fullName>3-hydroxybenzoate 6-hydroxylase</fullName>
        <ecNumber>1.14.13.24</ecNumber>
    </recommendedName>
</protein>
<sequence>MSDNPADLPVLVAGGGIGGLAAALALVRRGFSVKVLEQAPEIGEIGAGIQLGPNAFHAFDALGIGEKARGRAVYTDEMVMHDAIDGSLVGRIPTGEAFRQRFGNPYAVIHRVDVHLSLLEGAQETGKVEFLTSTRALRIEQDEGSVTVYDQHGNAHKGIALIGADGVKSVVREQFVGDAARVTGHVVYRAVVDKKDFPESLQWNAASIWVGPNCHLVHYPLRGGEQYNVVVTFHSRQPEQWGVTEGSKEEVQSYFQGICPQARQLIDLPKTWKRWATADREPIGQWSFGRVTLLGDAAHPTTQYMAQGACMAMEDGVTLGEALRVNNNDFPKAFELYQRSRVARTARIVLSSREMGRIYHAQGVERLVRNDLWKGRTPERFYDAMEWLYGWNVGNCLAKD</sequence>
<keyword id="KW-0058">Aromatic hydrocarbons catabolism</keyword>
<keyword id="KW-0274">FAD</keyword>
<keyword id="KW-0285">Flavoprotein</keyword>
<keyword id="KW-0503">Monooxygenase</keyword>
<keyword id="KW-0520">NAD</keyword>
<keyword id="KW-0521">NADP</keyword>
<keyword id="KW-0560">Oxidoreductase</keyword>
<keyword id="KW-1185">Reference proteome</keyword>
<evidence type="ECO:0000269" key="1">
    <source>
    </source>
</evidence>
<evidence type="ECO:0000305" key="2"/>
<gene>
    <name type="primary">nagX</name>
    <name type="ordered locus">Pnap_3144</name>
</gene>
<accession>Q3S4B7</accession>
<comment type="function">
    <text>Catalyzes the NAD- or NADP-dependent conversion of 3-hydroxybenzoate to gentisate. The affinity of the enzyme toward NAD is twice as high as for NADP.</text>
</comment>
<comment type="catalytic activity">
    <reaction evidence="1">
        <text>3-hydroxybenzoate + NADH + O2 + H(+) = 2,5-dihydroxybenzoate + NAD(+) + H2O</text>
        <dbReference type="Rhea" id="RHEA:22692"/>
        <dbReference type="ChEBI" id="CHEBI:15377"/>
        <dbReference type="ChEBI" id="CHEBI:15378"/>
        <dbReference type="ChEBI" id="CHEBI:15379"/>
        <dbReference type="ChEBI" id="CHEBI:16193"/>
        <dbReference type="ChEBI" id="CHEBI:57540"/>
        <dbReference type="ChEBI" id="CHEBI:57945"/>
        <dbReference type="ChEBI" id="CHEBI:58044"/>
        <dbReference type="EC" id="1.14.13.24"/>
    </reaction>
</comment>
<comment type="cofactor">
    <cofactor evidence="1">
        <name>FAD</name>
        <dbReference type="ChEBI" id="CHEBI:57692"/>
    </cofactor>
</comment>
<comment type="biophysicochemical properties">
    <kinetics>
        <KM evidence="1">64.9 uM for 3-hydroxybenzoate</KM>
        <KM evidence="1">493 uM for NADH</KM>
        <KM evidence="1">860 uM for NADPH</KM>
    </kinetics>
    <phDependence>
        <text evidence="1">Optimum pH is 8.4.</text>
    </phDependence>
    <temperatureDependence>
        <text evidence="1">Optimum temperature is 30 degrees Celsius.</text>
    </temperatureDependence>
</comment>
<comment type="subunit">
    <text evidence="1">Monomer.</text>
</comment>
<comment type="similarity">
    <text evidence="2">Belongs to the 3-hydroxybenzoate 6-hydroxylase family.</text>
</comment>
<proteinExistence type="evidence at protein level"/>
<reference key="1">
    <citation type="journal article" date="2006" name="Appl. Environ. Microbiol.">
        <title>The naphthalene catabolic (nag) genes of Polaromonas naphthalenivorans CJ2: evolutionary implications for two gene clusters and novel regulatory control.</title>
        <authorList>
            <person name="Jeon C.O."/>
            <person name="Park M."/>
            <person name="Ro H.-S."/>
            <person name="Park W."/>
            <person name="Madsen E.L."/>
        </authorList>
    </citation>
    <scope>NUCLEOTIDE SEQUENCE [GENOMIC DNA]</scope>
</reference>
<reference key="2">
    <citation type="journal article" date="2009" name="Environ. Microbiol.">
        <title>The genome of Polaromonas naphthalenivorans strain CJ2, isolated from coal tar-contaminated sediment, reveals physiological and metabolic versatility and evolution through extensive horizontal gene transfer.</title>
        <authorList>
            <person name="Yagi J.M."/>
            <person name="Sims D."/>
            <person name="Brettin T."/>
            <person name="Bruce D."/>
            <person name="Madsen E.L."/>
        </authorList>
    </citation>
    <scope>NUCLEOTIDE SEQUENCE [LARGE SCALE GENOMIC DNA]</scope>
    <source>
        <strain>CJ2</strain>
    </source>
</reference>
<reference key="3">
    <citation type="journal article" date="2007" name="Appl. Environ. Microbiol.">
        <title>Molecular and biochemical characterization of 3-hydroxybenzoate 6-hydroxylase from Polaromonas naphthalenivorans CJ2.</title>
        <authorList>
            <person name="Park M."/>
            <person name="Jeon Y."/>
            <person name="Jang H.H."/>
            <person name="Ro H.-S."/>
            <person name="Park W."/>
            <person name="Madsen E.L."/>
            <person name="Jeon C.O."/>
        </authorList>
    </citation>
    <scope>CATALYTIC ACTIVITY</scope>
    <scope>BIOPHYSICOCHEMICAL PROPERTIES</scope>
    <scope>SUBUNIT</scope>
    <scope>COFACTOR</scope>
</reference>
<dbReference type="EC" id="1.14.13.24"/>
<dbReference type="EMBL" id="DQ167475">
    <property type="protein sequence ID" value="AAZ93401.1"/>
    <property type="molecule type" value="Genomic_DNA"/>
</dbReference>
<dbReference type="EMBL" id="CP000529">
    <property type="protein sequence ID" value="ABM38442.1"/>
    <property type="molecule type" value="Genomic_DNA"/>
</dbReference>
<dbReference type="RefSeq" id="WP_011802513.1">
    <property type="nucleotide sequence ID" value="NC_008781.1"/>
</dbReference>
<dbReference type="SMR" id="Q3S4B7"/>
<dbReference type="STRING" id="365044.Pnap_3144"/>
<dbReference type="KEGG" id="pna:Pnap_3144"/>
<dbReference type="eggNOG" id="COG0654">
    <property type="taxonomic scope" value="Bacteria"/>
</dbReference>
<dbReference type="HOGENOM" id="CLU_009665_19_3_4"/>
<dbReference type="OrthoDB" id="9782160at2"/>
<dbReference type="SABIO-RK" id="Q3S4B7"/>
<dbReference type="Proteomes" id="UP000000644">
    <property type="component" value="Chromosome"/>
</dbReference>
<dbReference type="GO" id="GO:0018669">
    <property type="term" value="F:3-hydroxybenzoate 6-monooxygenase activity"/>
    <property type="evidence" value="ECO:0007669"/>
    <property type="project" value="UniProtKB-EC"/>
</dbReference>
<dbReference type="GO" id="GO:0071949">
    <property type="term" value="F:FAD binding"/>
    <property type="evidence" value="ECO:0007669"/>
    <property type="project" value="InterPro"/>
</dbReference>
<dbReference type="GO" id="GO:0009056">
    <property type="term" value="P:catabolic process"/>
    <property type="evidence" value="ECO:0007669"/>
    <property type="project" value="UniProtKB-KW"/>
</dbReference>
<dbReference type="FunFam" id="3.50.50.60:FF:000131">
    <property type="entry name" value="3-hydroxybenzoate 6-monooxygenase"/>
    <property type="match status" value="1"/>
</dbReference>
<dbReference type="Gene3D" id="3.50.50.60">
    <property type="entry name" value="FAD/NAD(P)-binding domain"/>
    <property type="match status" value="1"/>
</dbReference>
<dbReference type="InterPro" id="IPR002938">
    <property type="entry name" value="FAD-bd"/>
</dbReference>
<dbReference type="InterPro" id="IPR050493">
    <property type="entry name" value="FAD-dep_Monooxygenase_BioMet"/>
</dbReference>
<dbReference type="InterPro" id="IPR036188">
    <property type="entry name" value="FAD/NAD-bd_sf"/>
</dbReference>
<dbReference type="NCBIfam" id="NF006021">
    <property type="entry name" value="PRK08163.1"/>
    <property type="match status" value="1"/>
</dbReference>
<dbReference type="PANTHER" id="PTHR13789:SF318">
    <property type="entry name" value="GERANYLGERANYL DIPHOSPHATE REDUCTASE"/>
    <property type="match status" value="1"/>
</dbReference>
<dbReference type="PANTHER" id="PTHR13789">
    <property type="entry name" value="MONOOXYGENASE"/>
    <property type="match status" value="1"/>
</dbReference>
<dbReference type="Pfam" id="PF01494">
    <property type="entry name" value="FAD_binding_3"/>
    <property type="match status" value="1"/>
</dbReference>
<dbReference type="PRINTS" id="PR00420">
    <property type="entry name" value="RNGMNOXGNASE"/>
</dbReference>
<dbReference type="SUPFAM" id="SSF54373">
    <property type="entry name" value="FAD-linked reductases, C-terminal domain"/>
    <property type="match status" value="1"/>
</dbReference>
<dbReference type="SUPFAM" id="SSF51905">
    <property type="entry name" value="FAD/NAD(P)-binding domain"/>
    <property type="match status" value="1"/>
</dbReference>